<organism>
    <name type="scientific">Mycobacterium bovis (strain ATCC BAA-935 / AF2122/97)</name>
    <dbReference type="NCBI Taxonomy" id="233413"/>
    <lineage>
        <taxon>Bacteria</taxon>
        <taxon>Bacillati</taxon>
        <taxon>Actinomycetota</taxon>
        <taxon>Actinomycetes</taxon>
        <taxon>Mycobacteriales</taxon>
        <taxon>Mycobacteriaceae</taxon>
        <taxon>Mycobacterium</taxon>
        <taxon>Mycobacterium tuberculosis complex</taxon>
    </lineage>
</organism>
<comment type="function">
    <text evidence="3">Catalyzes the oxidative phosphorylation of glyceraldehyde 3-phosphate (G3P) to 1,3-bisphosphoglycerate (BPG) using the cofactor NAD. The first reaction step involves the formation of a hemiacetal intermediate between G3P and a cysteine residue, and this hemiacetal intermediate is then oxidized to a thioester, with concomitant reduction of NAD to NADH. The reduced NADH is then exchanged with the second NAD, and the thioester is attacked by a nucleophilic inorganic phosphate to produce BPG.</text>
</comment>
<comment type="catalytic activity">
    <reaction evidence="3">
        <text>D-glyceraldehyde 3-phosphate + phosphate + NAD(+) = (2R)-3-phospho-glyceroyl phosphate + NADH + H(+)</text>
        <dbReference type="Rhea" id="RHEA:10300"/>
        <dbReference type="ChEBI" id="CHEBI:15378"/>
        <dbReference type="ChEBI" id="CHEBI:43474"/>
        <dbReference type="ChEBI" id="CHEBI:57540"/>
        <dbReference type="ChEBI" id="CHEBI:57604"/>
        <dbReference type="ChEBI" id="CHEBI:57945"/>
        <dbReference type="ChEBI" id="CHEBI:59776"/>
        <dbReference type="EC" id="1.2.1.12"/>
    </reaction>
</comment>
<comment type="pathway">
    <text evidence="4">Carbohydrate degradation; glycolysis; pyruvate from D-glyceraldehyde 3-phosphate: step 1/5.</text>
</comment>
<comment type="subunit">
    <text evidence="2">Homotetramer.</text>
</comment>
<comment type="subcellular location">
    <subcellularLocation>
        <location evidence="4">Cytoplasm</location>
    </subcellularLocation>
</comment>
<comment type="similarity">
    <text evidence="4">Belongs to the glyceraldehyde-3-phosphate dehydrogenase family.</text>
</comment>
<dbReference type="EC" id="1.2.1.12" evidence="3"/>
<dbReference type="EMBL" id="LT708304">
    <property type="protein sequence ID" value="SIU00074.1"/>
    <property type="molecule type" value="Genomic_DNA"/>
</dbReference>
<dbReference type="RefSeq" id="NP_855123.1">
    <property type="nucleotide sequence ID" value="NC_002945.3"/>
</dbReference>
<dbReference type="RefSeq" id="WP_003407390.1">
    <property type="nucleotide sequence ID" value="NC_002945.4"/>
</dbReference>
<dbReference type="SMR" id="P64179"/>
<dbReference type="GeneID" id="45425414"/>
<dbReference type="KEGG" id="mbo:BQ2027_MB1471"/>
<dbReference type="PATRIC" id="fig|233413.5.peg.1605"/>
<dbReference type="UniPathway" id="UPA00109">
    <property type="reaction ID" value="UER00184"/>
</dbReference>
<dbReference type="Proteomes" id="UP000001419">
    <property type="component" value="Chromosome"/>
</dbReference>
<dbReference type="GO" id="GO:0005737">
    <property type="term" value="C:cytoplasm"/>
    <property type="evidence" value="ECO:0007669"/>
    <property type="project" value="UniProtKB-SubCell"/>
</dbReference>
<dbReference type="GO" id="GO:0004365">
    <property type="term" value="F:glyceraldehyde-3-phosphate dehydrogenase (NAD+) (phosphorylating) activity"/>
    <property type="evidence" value="ECO:0000250"/>
    <property type="project" value="UniProtKB"/>
</dbReference>
<dbReference type="GO" id="GO:0051287">
    <property type="term" value="F:NAD binding"/>
    <property type="evidence" value="ECO:0000250"/>
    <property type="project" value="UniProtKB"/>
</dbReference>
<dbReference type="GO" id="GO:0050661">
    <property type="term" value="F:NADP binding"/>
    <property type="evidence" value="ECO:0007669"/>
    <property type="project" value="InterPro"/>
</dbReference>
<dbReference type="GO" id="GO:0006006">
    <property type="term" value="P:glucose metabolic process"/>
    <property type="evidence" value="ECO:0007669"/>
    <property type="project" value="InterPro"/>
</dbReference>
<dbReference type="GO" id="GO:0006096">
    <property type="term" value="P:glycolytic process"/>
    <property type="evidence" value="ECO:0007669"/>
    <property type="project" value="UniProtKB-UniPathway"/>
</dbReference>
<dbReference type="CDD" id="cd18126">
    <property type="entry name" value="GAPDH_I_C"/>
    <property type="match status" value="1"/>
</dbReference>
<dbReference type="CDD" id="cd05214">
    <property type="entry name" value="GAPDH_I_N"/>
    <property type="match status" value="1"/>
</dbReference>
<dbReference type="FunFam" id="3.30.360.10:FF:000002">
    <property type="entry name" value="Glyceraldehyde-3-phosphate dehydrogenase"/>
    <property type="match status" value="1"/>
</dbReference>
<dbReference type="FunFam" id="3.40.50.720:FF:000001">
    <property type="entry name" value="Glyceraldehyde-3-phosphate dehydrogenase"/>
    <property type="match status" value="1"/>
</dbReference>
<dbReference type="Gene3D" id="3.30.360.10">
    <property type="entry name" value="Dihydrodipicolinate Reductase, domain 2"/>
    <property type="match status" value="1"/>
</dbReference>
<dbReference type="Gene3D" id="3.40.50.720">
    <property type="entry name" value="NAD(P)-binding Rossmann-like Domain"/>
    <property type="match status" value="1"/>
</dbReference>
<dbReference type="InterPro" id="IPR020831">
    <property type="entry name" value="GlycerAld/Erythrose_P_DH"/>
</dbReference>
<dbReference type="InterPro" id="IPR020830">
    <property type="entry name" value="GlycerAld_3-P_DH_AS"/>
</dbReference>
<dbReference type="InterPro" id="IPR020829">
    <property type="entry name" value="GlycerAld_3-P_DH_cat"/>
</dbReference>
<dbReference type="InterPro" id="IPR020828">
    <property type="entry name" value="GlycerAld_3-P_DH_NAD(P)-bd"/>
</dbReference>
<dbReference type="InterPro" id="IPR006424">
    <property type="entry name" value="Glyceraldehyde-3-P_DH_1"/>
</dbReference>
<dbReference type="InterPro" id="IPR036291">
    <property type="entry name" value="NAD(P)-bd_dom_sf"/>
</dbReference>
<dbReference type="NCBIfam" id="TIGR01534">
    <property type="entry name" value="GAPDH-I"/>
    <property type="match status" value="1"/>
</dbReference>
<dbReference type="PANTHER" id="PTHR43148">
    <property type="entry name" value="GLYCERALDEHYDE-3-PHOSPHATE DEHYDROGENASE 2"/>
    <property type="match status" value="1"/>
</dbReference>
<dbReference type="Pfam" id="PF02800">
    <property type="entry name" value="Gp_dh_C"/>
    <property type="match status" value="1"/>
</dbReference>
<dbReference type="Pfam" id="PF00044">
    <property type="entry name" value="Gp_dh_N"/>
    <property type="match status" value="1"/>
</dbReference>
<dbReference type="PIRSF" id="PIRSF000149">
    <property type="entry name" value="GAP_DH"/>
    <property type="match status" value="1"/>
</dbReference>
<dbReference type="PRINTS" id="PR00078">
    <property type="entry name" value="G3PDHDRGNASE"/>
</dbReference>
<dbReference type="SMART" id="SM00846">
    <property type="entry name" value="Gp_dh_N"/>
    <property type="match status" value="1"/>
</dbReference>
<dbReference type="SUPFAM" id="SSF55347">
    <property type="entry name" value="Glyceraldehyde-3-phosphate dehydrogenase-like, C-terminal domain"/>
    <property type="match status" value="1"/>
</dbReference>
<dbReference type="SUPFAM" id="SSF51735">
    <property type="entry name" value="NAD(P)-binding Rossmann-fold domains"/>
    <property type="match status" value="1"/>
</dbReference>
<dbReference type="PROSITE" id="PS00071">
    <property type="entry name" value="GAPDH"/>
    <property type="match status" value="1"/>
</dbReference>
<gene>
    <name type="primary">gap</name>
    <name type="ordered locus">BQ2027_MB1471</name>
</gene>
<protein>
    <recommendedName>
        <fullName evidence="3">Glyceraldehyde-3-phosphate dehydrogenase</fullName>
        <shortName evidence="3">GAPDH</shortName>
        <ecNumber evidence="3">1.2.1.12</ecNumber>
    </recommendedName>
    <alternativeName>
        <fullName evidence="3">NAD-dependent glyceraldehyde-3-phosphate dehydrogenase</fullName>
    </alternativeName>
</protein>
<keyword id="KW-0963">Cytoplasm</keyword>
<keyword id="KW-0324">Glycolysis</keyword>
<keyword id="KW-0520">NAD</keyword>
<keyword id="KW-0547">Nucleotide-binding</keyword>
<keyword id="KW-0560">Oxidoreductase</keyword>
<keyword id="KW-1185">Reference proteome</keyword>
<name>G3P_MYCBO</name>
<feature type="chain" id="PRO_0000145672" description="Glyceraldehyde-3-phosphate dehydrogenase">
    <location>
        <begin position="1"/>
        <end position="339"/>
    </location>
</feature>
<feature type="active site" description="Nucleophile" evidence="1">
    <location>
        <position position="158"/>
    </location>
</feature>
<feature type="binding site" evidence="1">
    <location>
        <begin position="12"/>
        <end position="13"/>
    </location>
    <ligand>
        <name>NAD(+)</name>
        <dbReference type="ChEBI" id="CHEBI:57540"/>
    </ligand>
</feature>
<feature type="binding site" evidence="1">
    <location>
        <position position="39"/>
    </location>
    <ligand>
        <name>NAD(+)</name>
        <dbReference type="ChEBI" id="CHEBI:57540"/>
    </ligand>
</feature>
<feature type="binding site" evidence="1">
    <location>
        <position position="84"/>
    </location>
    <ligand>
        <name>NAD(+)</name>
        <dbReference type="ChEBI" id="CHEBI:57540"/>
    </ligand>
</feature>
<feature type="binding site" evidence="1">
    <location>
        <position position="127"/>
    </location>
    <ligand>
        <name>NAD(+)</name>
        <dbReference type="ChEBI" id="CHEBI:57540"/>
    </ligand>
</feature>
<feature type="binding site" evidence="1">
    <location>
        <begin position="157"/>
        <end position="159"/>
    </location>
    <ligand>
        <name>D-glyceraldehyde 3-phosphate</name>
        <dbReference type="ChEBI" id="CHEBI:59776"/>
    </ligand>
</feature>
<feature type="binding site" evidence="1">
    <location>
        <position position="188"/>
    </location>
    <ligand>
        <name>D-glyceraldehyde 3-phosphate</name>
        <dbReference type="ChEBI" id="CHEBI:59776"/>
    </ligand>
</feature>
<feature type="binding site" evidence="1">
    <location>
        <position position="203"/>
    </location>
    <ligand>
        <name>D-glyceraldehyde 3-phosphate</name>
        <dbReference type="ChEBI" id="CHEBI:59776"/>
    </ligand>
</feature>
<feature type="binding site" evidence="1">
    <location>
        <begin position="216"/>
        <end position="217"/>
    </location>
    <ligand>
        <name>D-glyceraldehyde 3-phosphate</name>
        <dbReference type="ChEBI" id="CHEBI:59776"/>
    </ligand>
</feature>
<feature type="binding site" evidence="1">
    <location>
        <position position="239"/>
    </location>
    <ligand>
        <name>D-glyceraldehyde 3-phosphate</name>
        <dbReference type="ChEBI" id="CHEBI:59776"/>
    </ligand>
</feature>
<feature type="binding site" evidence="1">
    <location>
        <position position="320"/>
    </location>
    <ligand>
        <name>NAD(+)</name>
        <dbReference type="ChEBI" id="CHEBI:57540"/>
    </ligand>
</feature>
<feature type="site" description="Activates thiol group during catalysis" evidence="1">
    <location>
        <position position="185"/>
    </location>
</feature>
<evidence type="ECO:0000250" key="1">
    <source>
        <dbReference type="UniProtKB" id="P00362"/>
    </source>
</evidence>
<evidence type="ECO:0000250" key="2">
    <source>
        <dbReference type="UniProtKB" id="P54226"/>
    </source>
</evidence>
<evidence type="ECO:0000250" key="3">
    <source>
        <dbReference type="UniProtKB" id="P9WN83"/>
    </source>
</evidence>
<evidence type="ECO:0000305" key="4"/>
<reference key="1">
    <citation type="journal article" date="2003" name="Proc. Natl. Acad. Sci. U.S.A.">
        <title>The complete genome sequence of Mycobacterium bovis.</title>
        <authorList>
            <person name="Garnier T."/>
            <person name="Eiglmeier K."/>
            <person name="Camus J.-C."/>
            <person name="Medina N."/>
            <person name="Mansoor H."/>
            <person name="Pryor M."/>
            <person name="Duthoy S."/>
            <person name="Grondin S."/>
            <person name="Lacroix C."/>
            <person name="Monsempe C."/>
            <person name="Simon S."/>
            <person name="Harris B."/>
            <person name="Atkin R."/>
            <person name="Doggett J."/>
            <person name="Mayes R."/>
            <person name="Keating L."/>
            <person name="Wheeler P.R."/>
            <person name="Parkhill J."/>
            <person name="Barrell B.G."/>
            <person name="Cole S.T."/>
            <person name="Gordon S.V."/>
            <person name="Hewinson R.G."/>
        </authorList>
    </citation>
    <scope>NUCLEOTIDE SEQUENCE [LARGE SCALE GENOMIC DNA]</scope>
    <source>
        <strain>ATCC BAA-935 / AF2122/97</strain>
    </source>
</reference>
<reference key="2">
    <citation type="journal article" date="2017" name="Genome Announc.">
        <title>Updated reference genome sequence and annotation of Mycobacterium bovis AF2122/97.</title>
        <authorList>
            <person name="Malone K.M."/>
            <person name="Farrell D."/>
            <person name="Stuber T.P."/>
            <person name="Schubert O.T."/>
            <person name="Aebersold R."/>
            <person name="Robbe-Austerman S."/>
            <person name="Gordon S.V."/>
        </authorList>
    </citation>
    <scope>NUCLEOTIDE SEQUENCE [LARGE SCALE GENOMIC DNA]</scope>
    <scope>GENOME REANNOTATION</scope>
    <source>
        <strain>ATCC BAA-935 / AF2122/97</strain>
    </source>
</reference>
<proteinExistence type="inferred from homology"/>
<accession>P64179</accession>
<accession>A0A1R3XZB8</accession>
<accession>O06822</accession>
<accession>X2BHX4</accession>
<sequence>MTVRVGINGFGRIGRNFYRALLAQQEQGTADVEVVAANDITDNSTLAHLLKFDSILGRLPCDVGLEGDDTIVVGRAKIKALAVREGPAALPWGDLGVDVVVESTGLFTNAAKAKGHLDAGAKKVIISAPATDEDITIVLGVNDDKYDGSQNIISNASCTTNCLAPLAKVLDDEFGIVKGLMTTIHAYTQDQNLQDGPHKDLRRARAAALNIVPTSTGAAKAIGLVMPQLKGKLDGYALRVPIPTGSVTDLTVDLSTRASVDEINAAFKAAAEGRLKGILKYYDAPIVSSDIVTDPHSSIFDSGLTKVIDDQAKVVSWYDNEWGYSNRLVDLVTLVGKSL</sequence>